<comment type="function">
    <text evidence="1">F(1)F(0) ATP synthase produces ATP from ADP in the presence of a proton or sodium gradient. F-type ATPases consist of two structural domains, F(1) containing the extramembraneous catalytic core and F(0) containing the membrane proton channel, linked together by a central stalk and a peripheral stalk. During catalysis, ATP synthesis in the catalytic domain of F(1) is coupled via a rotary mechanism of the central stalk subunits to proton translocation.</text>
</comment>
<comment type="function">
    <text evidence="1">Component of the F(0) channel, it forms part of the peripheral stalk, linking F(1) to F(0).</text>
</comment>
<comment type="subunit">
    <text evidence="1">F-type ATPases have 2 components, F(1) - the catalytic core - and F(0) - the membrane proton channel. F(1) has five subunits: alpha(3), beta(3), gamma(1), delta(1), epsilon(1). F(0) has three main subunits: a(1), b(2) and c(10-14). The alpha and beta chains form an alternating ring which encloses part of the gamma chain. F(1) is attached to F(0) by a central stalk formed by the gamma and epsilon chains, while a peripheral stalk is formed by the delta and b chains.</text>
</comment>
<comment type="subcellular location">
    <subcellularLocation>
        <location evidence="1">Cell inner membrane</location>
        <topology evidence="1">Single-pass membrane protein</topology>
    </subcellularLocation>
</comment>
<comment type="similarity">
    <text evidence="1">Belongs to the ATPase B chain family.</text>
</comment>
<gene>
    <name evidence="1" type="primary">atpF</name>
    <name type="ordered locus">Smal_3515</name>
</gene>
<name>ATPF_STRM5</name>
<evidence type="ECO:0000255" key="1">
    <source>
        <dbReference type="HAMAP-Rule" id="MF_01398"/>
    </source>
</evidence>
<sequence length="156" mass="17101">MNINFTLLAQALAFAGLIWIIATKIWPPLMNAIEERQQKIAEGLAAADRSQKDLAQAQEKVNEALKEARTKANEIIDQAHARANQIVDAARTEAITEATRQKDLAQAEIDAAANRAREDLRKQVSALAVTGAEKLLKREIDANAHKALLDELASEI</sequence>
<reference key="1">
    <citation type="submission" date="2008-06" db="EMBL/GenBank/DDBJ databases">
        <title>Complete sequence of Stenotrophomonas maltophilia R551-3.</title>
        <authorList>
            <consortium name="US DOE Joint Genome Institute"/>
            <person name="Lucas S."/>
            <person name="Copeland A."/>
            <person name="Lapidus A."/>
            <person name="Glavina del Rio T."/>
            <person name="Dalin E."/>
            <person name="Tice H."/>
            <person name="Pitluck S."/>
            <person name="Chain P."/>
            <person name="Malfatti S."/>
            <person name="Shin M."/>
            <person name="Vergez L."/>
            <person name="Lang D."/>
            <person name="Schmutz J."/>
            <person name="Larimer F."/>
            <person name="Land M."/>
            <person name="Hauser L."/>
            <person name="Kyrpides N."/>
            <person name="Mikhailova N."/>
            <person name="Taghavi S."/>
            <person name="Monchy S."/>
            <person name="Newman L."/>
            <person name="Vangronsveld J."/>
            <person name="van der Lelie D."/>
            <person name="Richardson P."/>
        </authorList>
    </citation>
    <scope>NUCLEOTIDE SEQUENCE [LARGE SCALE GENOMIC DNA]</scope>
    <source>
        <strain>R551-3</strain>
    </source>
</reference>
<protein>
    <recommendedName>
        <fullName evidence="1">ATP synthase subunit b</fullName>
    </recommendedName>
    <alternativeName>
        <fullName evidence="1">ATP synthase F(0) sector subunit b</fullName>
    </alternativeName>
    <alternativeName>
        <fullName evidence="1">ATPase subunit I</fullName>
    </alternativeName>
    <alternativeName>
        <fullName evidence="1">F-type ATPase subunit b</fullName>
        <shortName evidence="1">F-ATPase subunit b</shortName>
    </alternativeName>
</protein>
<feature type="chain" id="PRO_0000368791" description="ATP synthase subunit b">
    <location>
        <begin position="1"/>
        <end position="156"/>
    </location>
</feature>
<feature type="transmembrane region" description="Helical" evidence="1">
    <location>
        <begin position="3"/>
        <end position="23"/>
    </location>
</feature>
<organism>
    <name type="scientific">Stenotrophomonas maltophilia (strain R551-3)</name>
    <dbReference type="NCBI Taxonomy" id="391008"/>
    <lineage>
        <taxon>Bacteria</taxon>
        <taxon>Pseudomonadati</taxon>
        <taxon>Pseudomonadota</taxon>
        <taxon>Gammaproteobacteria</taxon>
        <taxon>Lysobacterales</taxon>
        <taxon>Lysobacteraceae</taxon>
        <taxon>Stenotrophomonas</taxon>
        <taxon>Stenotrophomonas maltophilia group</taxon>
    </lineage>
</organism>
<accession>B4SJS3</accession>
<keyword id="KW-0066">ATP synthesis</keyword>
<keyword id="KW-0997">Cell inner membrane</keyword>
<keyword id="KW-1003">Cell membrane</keyword>
<keyword id="KW-0138">CF(0)</keyword>
<keyword id="KW-0375">Hydrogen ion transport</keyword>
<keyword id="KW-0406">Ion transport</keyword>
<keyword id="KW-0472">Membrane</keyword>
<keyword id="KW-0812">Transmembrane</keyword>
<keyword id="KW-1133">Transmembrane helix</keyword>
<keyword id="KW-0813">Transport</keyword>
<dbReference type="EMBL" id="CP001111">
    <property type="protein sequence ID" value="ACF53214.1"/>
    <property type="molecule type" value="Genomic_DNA"/>
</dbReference>
<dbReference type="RefSeq" id="WP_012512170.1">
    <property type="nucleotide sequence ID" value="NC_011071.1"/>
</dbReference>
<dbReference type="SMR" id="B4SJS3"/>
<dbReference type="STRING" id="391008.Smal_3515"/>
<dbReference type="KEGG" id="smt:Smal_3515"/>
<dbReference type="eggNOG" id="COG0711">
    <property type="taxonomic scope" value="Bacteria"/>
</dbReference>
<dbReference type="HOGENOM" id="CLU_079215_4_5_6"/>
<dbReference type="OrthoDB" id="9788020at2"/>
<dbReference type="Proteomes" id="UP000001867">
    <property type="component" value="Chromosome"/>
</dbReference>
<dbReference type="GO" id="GO:0005886">
    <property type="term" value="C:plasma membrane"/>
    <property type="evidence" value="ECO:0007669"/>
    <property type="project" value="UniProtKB-SubCell"/>
</dbReference>
<dbReference type="GO" id="GO:0045259">
    <property type="term" value="C:proton-transporting ATP synthase complex"/>
    <property type="evidence" value="ECO:0007669"/>
    <property type="project" value="UniProtKB-KW"/>
</dbReference>
<dbReference type="GO" id="GO:0046933">
    <property type="term" value="F:proton-transporting ATP synthase activity, rotational mechanism"/>
    <property type="evidence" value="ECO:0007669"/>
    <property type="project" value="UniProtKB-UniRule"/>
</dbReference>
<dbReference type="GO" id="GO:0046961">
    <property type="term" value="F:proton-transporting ATPase activity, rotational mechanism"/>
    <property type="evidence" value="ECO:0007669"/>
    <property type="project" value="TreeGrafter"/>
</dbReference>
<dbReference type="CDD" id="cd06503">
    <property type="entry name" value="ATP-synt_Fo_b"/>
    <property type="match status" value="1"/>
</dbReference>
<dbReference type="Gene3D" id="6.10.250.1580">
    <property type="match status" value="1"/>
</dbReference>
<dbReference type="HAMAP" id="MF_01398">
    <property type="entry name" value="ATP_synth_b_bprime"/>
    <property type="match status" value="1"/>
</dbReference>
<dbReference type="InterPro" id="IPR028987">
    <property type="entry name" value="ATP_synth_B-like_membr_sf"/>
</dbReference>
<dbReference type="InterPro" id="IPR002146">
    <property type="entry name" value="ATP_synth_b/b'su_bac/chlpt"/>
</dbReference>
<dbReference type="InterPro" id="IPR005864">
    <property type="entry name" value="ATP_synth_F0_bsu_bac"/>
</dbReference>
<dbReference type="InterPro" id="IPR050059">
    <property type="entry name" value="ATP_synthase_B_chain"/>
</dbReference>
<dbReference type="NCBIfam" id="TIGR01144">
    <property type="entry name" value="ATP_synt_b"/>
    <property type="match status" value="1"/>
</dbReference>
<dbReference type="NCBIfam" id="NF004411">
    <property type="entry name" value="PRK05759.1-2"/>
    <property type="match status" value="1"/>
</dbReference>
<dbReference type="PANTHER" id="PTHR33445:SF1">
    <property type="entry name" value="ATP SYNTHASE SUBUNIT B"/>
    <property type="match status" value="1"/>
</dbReference>
<dbReference type="PANTHER" id="PTHR33445">
    <property type="entry name" value="ATP SYNTHASE SUBUNIT B', CHLOROPLASTIC"/>
    <property type="match status" value="1"/>
</dbReference>
<dbReference type="Pfam" id="PF00430">
    <property type="entry name" value="ATP-synt_B"/>
    <property type="match status" value="1"/>
</dbReference>
<dbReference type="SUPFAM" id="SSF81573">
    <property type="entry name" value="F1F0 ATP synthase subunit B, membrane domain"/>
    <property type="match status" value="1"/>
</dbReference>
<proteinExistence type="inferred from homology"/>